<sequence>MDSGTEEYELNGGLPPGTPGSPDASPARWGWRHGPINVNHYASKKSAAESMLDIALLMANASQLKAVVEQGPSFAFYVPLVVLISISLVLQIGVGVLLIFLVKYDLNNPAKHAKLDFLNNLATGLVFIIVVVNIFITAFGVQKPLMDMAPQQ</sequence>
<evidence type="ECO:0000250" key="1">
    <source>
        <dbReference type="UniProtKB" id="O70131"/>
    </source>
</evidence>
<evidence type="ECO:0000250" key="2">
    <source>
        <dbReference type="UniProtKB" id="P70617"/>
    </source>
</evidence>
<evidence type="ECO:0000255" key="3"/>
<evidence type="ECO:0000255" key="4">
    <source>
        <dbReference type="PROSITE-ProRule" id="PRU00498"/>
    </source>
</evidence>
<evidence type="ECO:0000256" key="5">
    <source>
        <dbReference type="SAM" id="MobiDB-lite"/>
    </source>
</evidence>
<evidence type="ECO:0000269" key="6">
    <source>
    </source>
</evidence>
<evidence type="ECO:0000269" key="7">
    <source>
    </source>
</evidence>
<evidence type="ECO:0000269" key="8">
    <source>
    </source>
</evidence>
<evidence type="ECO:0000269" key="9">
    <source>
    </source>
</evidence>
<evidence type="ECO:0000269" key="10">
    <source>
    </source>
</evidence>
<evidence type="ECO:0000269" key="11">
    <source>
    </source>
</evidence>
<evidence type="ECO:0000269" key="12">
    <source>
    </source>
</evidence>
<evidence type="ECO:0000269" key="13">
    <source>
    </source>
</evidence>
<evidence type="ECO:0000269" key="14">
    <source>
    </source>
</evidence>
<evidence type="ECO:0000269" key="15">
    <source>
    </source>
</evidence>
<evidence type="ECO:0000269" key="16">
    <source>
    </source>
</evidence>
<evidence type="ECO:0000269" key="17">
    <source>
    </source>
</evidence>
<evidence type="ECO:0000269" key="18">
    <source>
    </source>
</evidence>
<evidence type="ECO:0000269" key="19">
    <source>
    </source>
</evidence>
<evidence type="ECO:0000269" key="20">
    <source>
    </source>
</evidence>
<evidence type="ECO:0000269" key="21">
    <source>
    </source>
</evidence>
<evidence type="ECO:0000303" key="22">
    <source>
    </source>
</evidence>
<evidence type="ECO:0000303" key="23">
    <source>
    </source>
</evidence>
<evidence type="ECO:0000303" key="24">
    <source>
    </source>
</evidence>
<evidence type="ECO:0000303" key="25">
    <source>
    </source>
</evidence>
<evidence type="ECO:0000305" key="26"/>
<evidence type="ECO:0000305" key="27">
    <source>
    </source>
</evidence>
<evidence type="ECO:0000312" key="28">
    <source>
        <dbReference type="HGNC" id="HGNC:7824"/>
    </source>
</evidence>
<evidence type="ECO:0007744" key="29">
    <source>
        <dbReference type="PDB" id="8CQR"/>
    </source>
</evidence>
<evidence type="ECO:0007744" key="30">
    <source>
        <dbReference type="PDB" id="8SZA"/>
    </source>
</evidence>
<evidence type="ECO:0007744" key="31">
    <source>
    </source>
</evidence>
<evidence type="ECO:0007829" key="32">
    <source>
        <dbReference type="PDB" id="8SZA"/>
    </source>
</evidence>
<organism>
    <name type="scientific">Homo sapiens</name>
    <name type="common">Human</name>
    <dbReference type="NCBI Taxonomy" id="9606"/>
    <lineage>
        <taxon>Eukaryota</taxon>
        <taxon>Metazoa</taxon>
        <taxon>Chordata</taxon>
        <taxon>Craniata</taxon>
        <taxon>Vertebrata</taxon>
        <taxon>Euteleostomi</taxon>
        <taxon>Mammalia</taxon>
        <taxon>Eutheria</taxon>
        <taxon>Euarchontoglires</taxon>
        <taxon>Primates</taxon>
        <taxon>Haplorrhini</taxon>
        <taxon>Catarrhini</taxon>
        <taxon>Hominidae</taxon>
        <taxon>Homo</taxon>
    </lineage>
</organism>
<keyword id="KW-0002">3D-structure</keyword>
<keyword id="KW-0007">Acetylation</keyword>
<keyword id="KW-0037">Angiogenesis</keyword>
<keyword id="KW-0130">Cell adhesion</keyword>
<keyword id="KW-1003">Cell membrane</keyword>
<keyword id="KW-0204">Cytolysis</keyword>
<keyword id="KW-0325">Glycoprotein</keyword>
<keyword id="KW-0395">Inflammatory response</keyword>
<keyword id="KW-0472">Membrane</keyword>
<keyword id="KW-0597">Phosphoprotein</keyword>
<keyword id="KW-1267">Proteomics identification</keyword>
<keyword id="KW-1185">Reference proteome</keyword>
<keyword id="KW-0964">Secreted</keyword>
<keyword id="KW-0770">Synapse</keyword>
<keyword id="KW-0812">Transmembrane</keyword>
<keyword id="KW-1133">Transmembrane helix</keyword>
<proteinExistence type="evidence at protein level"/>
<name>NINJ1_HUMAN</name>
<dbReference type="EMBL" id="U72661">
    <property type="protein sequence ID" value="AAB17560.1"/>
    <property type="molecule type" value="mRNA"/>
</dbReference>
<dbReference type="EMBL" id="U91512">
    <property type="protein sequence ID" value="AAC14593.1"/>
    <property type="molecule type" value="mRNA"/>
</dbReference>
<dbReference type="EMBL" id="AF029251">
    <property type="protein sequence ID" value="AAC39574.1"/>
    <property type="molecule type" value="Genomic_DNA"/>
</dbReference>
<dbReference type="EMBL" id="BT007164">
    <property type="protein sequence ID" value="AAP35828.1"/>
    <property type="molecule type" value="mRNA"/>
</dbReference>
<dbReference type="EMBL" id="AL451065">
    <property type="status" value="NOT_ANNOTATED_CDS"/>
    <property type="molecule type" value="Genomic_DNA"/>
</dbReference>
<dbReference type="EMBL" id="CH471089">
    <property type="protein sequence ID" value="EAW62856.1"/>
    <property type="molecule type" value="Genomic_DNA"/>
</dbReference>
<dbReference type="EMBL" id="BC000298">
    <property type="protein sequence ID" value="AAH00298.1"/>
    <property type="molecule type" value="mRNA"/>
</dbReference>
<dbReference type="EMBL" id="BC004440">
    <property type="protein sequence ID" value="AAH04440.1"/>
    <property type="molecule type" value="mRNA"/>
</dbReference>
<dbReference type="EMBL" id="BC019336">
    <property type="protein sequence ID" value="AAH19336.2"/>
    <property type="molecule type" value="mRNA"/>
</dbReference>
<dbReference type="EMBL" id="BC048212">
    <property type="protein sequence ID" value="AAH48212.1"/>
    <property type="molecule type" value="mRNA"/>
</dbReference>
<dbReference type="CCDS" id="CCDS6703.1"/>
<dbReference type="RefSeq" id="NP_004139.2">
    <property type="nucleotide sequence ID" value="NM_004148.4"/>
</dbReference>
<dbReference type="PDB" id="8CQR">
    <property type="method" value="EM"/>
    <property type="resolution" value="3.80 A"/>
    <property type="chains" value="A/B/C/D/E/F=2-152"/>
</dbReference>
<dbReference type="PDB" id="8SZA">
    <property type="method" value="EM"/>
    <property type="resolution" value="2.75 A"/>
    <property type="chains" value="A/B/C/D/E/F=2-152"/>
</dbReference>
<dbReference type="PDB" id="8UIP">
    <property type="method" value="EM"/>
    <property type="resolution" value="4.30 A"/>
    <property type="chains" value="A/B/C=1-152"/>
</dbReference>
<dbReference type="PDBsum" id="8CQR"/>
<dbReference type="PDBsum" id="8SZA"/>
<dbReference type="PDBsum" id="8UIP"/>
<dbReference type="BMRB" id="Q92982"/>
<dbReference type="EMDB" id="EMD-16799"/>
<dbReference type="EMDB" id="EMD-40905"/>
<dbReference type="EMDB" id="EMD-42301"/>
<dbReference type="SMR" id="Q92982"/>
<dbReference type="BioGRID" id="110879">
    <property type="interactions" value="23"/>
</dbReference>
<dbReference type="CORUM" id="Q92982"/>
<dbReference type="FunCoup" id="Q92982">
    <property type="interactions" value="38"/>
</dbReference>
<dbReference type="IntAct" id="Q92982">
    <property type="interactions" value="34"/>
</dbReference>
<dbReference type="STRING" id="9606.ENSP00000364595"/>
<dbReference type="TCDB" id="9.B.453.1.1">
    <property type="family name" value="the ninjurin (ninj) family"/>
</dbReference>
<dbReference type="GlyCosmos" id="Q92982">
    <property type="glycosylation" value="1 site, No reported glycans"/>
</dbReference>
<dbReference type="GlyGen" id="Q92982">
    <property type="glycosylation" value="2 sites"/>
</dbReference>
<dbReference type="iPTMnet" id="Q92982"/>
<dbReference type="PhosphoSitePlus" id="Q92982"/>
<dbReference type="SwissPalm" id="Q92982"/>
<dbReference type="BioMuta" id="NINJ1"/>
<dbReference type="DMDM" id="317373398"/>
<dbReference type="jPOST" id="Q92982"/>
<dbReference type="MassIVE" id="Q92982"/>
<dbReference type="PaxDb" id="9606-ENSP00000364595"/>
<dbReference type="PeptideAtlas" id="Q92982"/>
<dbReference type="ProteomicsDB" id="75642"/>
<dbReference type="Pumba" id="Q92982"/>
<dbReference type="Antibodypedia" id="28361">
    <property type="antibodies" value="172 antibodies from 27 providers"/>
</dbReference>
<dbReference type="DNASU" id="4814"/>
<dbReference type="Ensembl" id="ENST00000375446.5">
    <property type="protein sequence ID" value="ENSP00000364595.4"/>
    <property type="gene ID" value="ENSG00000131669.10"/>
</dbReference>
<dbReference type="GeneID" id="4814"/>
<dbReference type="KEGG" id="hsa:4814"/>
<dbReference type="MANE-Select" id="ENST00000375446.5">
    <property type="protein sequence ID" value="ENSP00000364595.4"/>
    <property type="RefSeq nucleotide sequence ID" value="NM_004148.4"/>
    <property type="RefSeq protein sequence ID" value="NP_004139.2"/>
</dbReference>
<dbReference type="UCSC" id="uc004atg.4">
    <property type="organism name" value="human"/>
</dbReference>
<dbReference type="AGR" id="HGNC:7824"/>
<dbReference type="CTD" id="4814"/>
<dbReference type="DisGeNET" id="4814"/>
<dbReference type="GeneCards" id="NINJ1"/>
<dbReference type="HGNC" id="HGNC:7824">
    <property type="gene designation" value="NINJ1"/>
</dbReference>
<dbReference type="HPA" id="ENSG00000131669">
    <property type="expression patterns" value="Tissue enhanced (bone)"/>
</dbReference>
<dbReference type="MIM" id="602062">
    <property type="type" value="gene"/>
</dbReference>
<dbReference type="neXtProt" id="NX_Q92982"/>
<dbReference type="OpenTargets" id="ENSG00000131669"/>
<dbReference type="PharmGKB" id="PA31631"/>
<dbReference type="VEuPathDB" id="HostDB:ENSG00000131669"/>
<dbReference type="eggNOG" id="ENOG502S12Z">
    <property type="taxonomic scope" value="Eukaryota"/>
</dbReference>
<dbReference type="GeneTree" id="ENSGT00940000158892"/>
<dbReference type="HOGENOM" id="CLU_093971_2_0_1"/>
<dbReference type="InParanoid" id="Q92982"/>
<dbReference type="OMA" id="ESCVMAF"/>
<dbReference type="OrthoDB" id="6114058at2759"/>
<dbReference type="PAN-GO" id="Q92982">
    <property type="GO annotations" value="1 GO annotation based on evolutionary models"/>
</dbReference>
<dbReference type="PhylomeDB" id="Q92982"/>
<dbReference type="TreeFam" id="TF323538"/>
<dbReference type="PathwayCommons" id="Q92982"/>
<dbReference type="SignaLink" id="Q92982"/>
<dbReference type="BioGRID-ORCS" id="4814">
    <property type="hits" value="11 hits in 1154 CRISPR screens"/>
</dbReference>
<dbReference type="ChiTaRS" id="NINJ1">
    <property type="organism name" value="human"/>
</dbReference>
<dbReference type="GeneWiki" id="NINJ1"/>
<dbReference type="GenomeRNAi" id="4814"/>
<dbReference type="Pharos" id="Q92982">
    <property type="development level" value="Tbio"/>
</dbReference>
<dbReference type="PRO" id="PR:Q92982"/>
<dbReference type="Proteomes" id="UP000005640">
    <property type="component" value="Chromosome 9"/>
</dbReference>
<dbReference type="RNAct" id="Q92982">
    <property type="molecule type" value="protein"/>
</dbReference>
<dbReference type="Bgee" id="ENSG00000131669">
    <property type="expression patterns" value="Expressed in right adrenal gland cortex and 160 other cell types or tissues"/>
</dbReference>
<dbReference type="GO" id="GO:0005576">
    <property type="term" value="C:extracellular region"/>
    <property type="evidence" value="ECO:0007669"/>
    <property type="project" value="UniProtKB-SubCell"/>
</dbReference>
<dbReference type="GO" id="GO:0005886">
    <property type="term" value="C:plasma membrane"/>
    <property type="evidence" value="ECO:0000314"/>
    <property type="project" value="UniProtKB"/>
</dbReference>
<dbReference type="GO" id="GO:0097060">
    <property type="term" value="C:synaptic membrane"/>
    <property type="evidence" value="ECO:0007669"/>
    <property type="project" value="UniProtKB-SubCell"/>
</dbReference>
<dbReference type="GO" id="GO:0098631">
    <property type="term" value="F:cell adhesion mediator activity"/>
    <property type="evidence" value="ECO:0000314"/>
    <property type="project" value="UniProtKB"/>
</dbReference>
<dbReference type="GO" id="GO:0001530">
    <property type="term" value="F:lipopolysaccharide binding"/>
    <property type="evidence" value="ECO:0000314"/>
    <property type="project" value="UniProtKB"/>
</dbReference>
<dbReference type="GO" id="GO:0140912">
    <property type="term" value="F:membrane destabilizing activity"/>
    <property type="evidence" value="ECO:0000314"/>
    <property type="project" value="UniProtKB"/>
</dbReference>
<dbReference type="GO" id="GO:0001525">
    <property type="term" value="P:angiogenesis"/>
    <property type="evidence" value="ECO:0007669"/>
    <property type="project" value="UniProtKB-KW"/>
</dbReference>
<dbReference type="GO" id="GO:0007155">
    <property type="term" value="P:cell adhesion"/>
    <property type="evidence" value="ECO:0000314"/>
    <property type="project" value="UniProtKB"/>
</dbReference>
<dbReference type="GO" id="GO:0071474">
    <property type="term" value="P:cellular hyperosmotic response"/>
    <property type="evidence" value="ECO:0000250"/>
    <property type="project" value="UniProtKB"/>
</dbReference>
<dbReference type="GO" id="GO:0019835">
    <property type="term" value="P:cytolysis"/>
    <property type="evidence" value="ECO:0000314"/>
    <property type="project" value="UniProtKB"/>
</dbReference>
<dbReference type="GO" id="GO:0097707">
    <property type="term" value="P:ferroptosis"/>
    <property type="evidence" value="ECO:0000250"/>
    <property type="project" value="UniProtKB"/>
</dbReference>
<dbReference type="GO" id="GO:0034113">
    <property type="term" value="P:heterotypic cell-cell adhesion"/>
    <property type="evidence" value="ECO:0000250"/>
    <property type="project" value="UniProtKB"/>
</dbReference>
<dbReference type="GO" id="GO:0031640">
    <property type="term" value="P:killing of cells of another organism"/>
    <property type="evidence" value="ECO:0007669"/>
    <property type="project" value="UniProtKB-KW"/>
</dbReference>
<dbReference type="GO" id="GO:0002232">
    <property type="term" value="P:leukocyte chemotaxis involved in inflammatory response"/>
    <property type="evidence" value="ECO:0000314"/>
    <property type="project" value="UniProtKB"/>
</dbReference>
<dbReference type="GO" id="GO:0042692">
    <property type="term" value="P:muscle cell differentiation"/>
    <property type="evidence" value="ECO:0000250"/>
    <property type="project" value="UniProtKB"/>
</dbReference>
<dbReference type="GO" id="GO:0007399">
    <property type="term" value="P:nervous system development"/>
    <property type="evidence" value="ECO:0000304"/>
    <property type="project" value="ProtInc"/>
</dbReference>
<dbReference type="GO" id="GO:0045766">
    <property type="term" value="P:positive regulation of angiogenesis"/>
    <property type="evidence" value="ECO:0000314"/>
    <property type="project" value="UniProtKB"/>
</dbReference>
<dbReference type="GO" id="GO:0050729">
    <property type="term" value="P:positive regulation of inflammatory response"/>
    <property type="evidence" value="ECO:0000314"/>
    <property type="project" value="UniProtKB"/>
</dbReference>
<dbReference type="GO" id="GO:0034145">
    <property type="term" value="P:positive regulation of toll-like receptor 4 signaling pathway"/>
    <property type="evidence" value="ECO:0000250"/>
    <property type="project" value="UniProtKB"/>
</dbReference>
<dbReference type="GO" id="GO:0097300">
    <property type="term" value="P:programmed necrotic cell death"/>
    <property type="evidence" value="ECO:0000314"/>
    <property type="project" value="UniProtKB"/>
</dbReference>
<dbReference type="GO" id="GO:0051260">
    <property type="term" value="P:protein homooligomerization"/>
    <property type="evidence" value="ECO:0000314"/>
    <property type="project" value="UniProtKB"/>
</dbReference>
<dbReference type="GO" id="GO:0141201">
    <property type="term" value="P:pyroptotic cell death"/>
    <property type="evidence" value="ECO:0000314"/>
    <property type="project" value="UniProtKB"/>
</dbReference>
<dbReference type="GO" id="GO:0042246">
    <property type="term" value="P:tissue regeneration"/>
    <property type="evidence" value="ECO:0007669"/>
    <property type="project" value="InterPro"/>
</dbReference>
<dbReference type="InterPro" id="IPR007007">
    <property type="entry name" value="Ninjurin"/>
</dbReference>
<dbReference type="PANTHER" id="PTHR12316:SF19">
    <property type="entry name" value="NINJURIN-1"/>
    <property type="match status" value="1"/>
</dbReference>
<dbReference type="PANTHER" id="PTHR12316">
    <property type="entry name" value="NINJURIN-RELATED"/>
    <property type="match status" value="1"/>
</dbReference>
<dbReference type="Pfam" id="PF04923">
    <property type="entry name" value="Ninjurin"/>
    <property type="match status" value="1"/>
</dbReference>
<protein>
    <recommendedName>
        <fullName evidence="25">Ninjurin-1</fullName>
        <shortName evidence="24">hNINJ1</shortName>
    </recommendedName>
    <alternativeName>
        <fullName evidence="25">Nerve injury-induced protein 1</fullName>
    </alternativeName>
    <component>
        <recommendedName>
            <fullName evidence="26">Secreted ninjurin-1</fullName>
        </recommendedName>
        <alternativeName>
            <fullName evidence="22">Soluble ninjurin-1</fullName>
        </alternativeName>
    </component>
</protein>
<feature type="chain" id="PRO_0000159643" description="Ninjurin-1">
    <location>
        <begin position="1"/>
        <end position="152"/>
    </location>
</feature>
<feature type="chain" id="PRO_0000452824" description="Secreted ninjurin-1" evidence="1">
    <location>
        <begin position="1"/>
        <end position="56"/>
    </location>
</feature>
<feature type="topological domain" description="Extracellular" evidence="15 18 29 30">
    <location>
        <begin position="1"/>
        <end position="78"/>
    </location>
</feature>
<feature type="transmembrane region" description="Helical; Name=Helix alpha3" evidence="15 18 29 30">
    <location>
        <begin position="79"/>
        <end position="103"/>
    </location>
</feature>
<feature type="topological domain" description="Cytoplasmic" evidence="15 18 29 30">
    <location>
        <begin position="104"/>
        <end position="113"/>
    </location>
</feature>
<feature type="transmembrane region" description="Helical; Name=Helix alpha4" evidence="15 18 29 30">
    <location>
        <begin position="114"/>
        <end position="138"/>
    </location>
</feature>
<feature type="topological domain" description="Extracellular" evidence="15 29">
    <location>
        <begin position="139"/>
        <end position="152"/>
    </location>
</feature>
<feature type="region of interest" description="Disordered" evidence="5">
    <location>
        <begin position="1"/>
        <end position="26"/>
    </location>
</feature>
<feature type="region of interest" description="N-terminal adhesion motif" evidence="11">
    <location>
        <begin position="26"/>
        <end position="37"/>
    </location>
</feature>
<feature type="region of interest" description="Required to induce plasma membrane rupture" evidence="1">
    <location>
        <begin position="40"/>
        <end position="69"/>
    </location>
</feature>
<feature type="region of interest" description="Helix alpha1" evidence="15 18 30">
    <location>
        <begin position="44"/>
        <end position="55"/>
    </location>
</feature>
<feature type="region of interest" description="Helix alpha2" evidence="15 18 30">
    <location>
        <begin position="58"/>
        <end position="74"/>
    </location>
</feature>
<feature type="site" description="Cleavage; by MMP9" evidence="1">
    <location>
        <begin position="56"/>
        <end position="57"/>
    </location>
</feature>
<feature type="modified residue" description="N-acetylmethionine" evidence="31">
    <location>
        <position position="1"/>
    </location>
</feature>
<feature type="modified residue" description="Phosphoserine" evidence="2">
    <location>
        <position position="21"/>
    </location>
</feature>
<feature type="modified residue" description="Phosphoserine" evidence="2">
    <location>
        <position position="25"/>
    </location>
</feature>
<feature type="glycosylation site" description="N-linked (GlcNAc...) asparagine" evidence="4">
    <location>
        <position position="60"/>
    </location>
</feature>
<feature type="sequence variant" id="VAR_025549" description="In dbSNP:rs2275848." evidence="6 19 21">
    <original>A</original>
    <variation>D</variation>
    <location>
        <position position="110"/>
    </location>
</feature>
<feature type="mutagenesis site" description="Strongly reduced ability to mediate plasma membrane rupture." evidence="17">
    <original>KK</original>
    <variation>QQ</variation>
    <location>
        <begin position="44"/>
        <end position="45"/>
    </location>
</feature>
<feature type="mutagenesis site" description="Strongly reduced ability to homooligomerize and mediate plasma membrane rupture (cytolysis)." evidence="15">
    <original>K</original>
    <variation>Q</variation>
    <location>
        <position position="45"/>
    </location>
</feature>
<feature type="mutagenesis site" description="Does not affect ability to homooligomerize in vitro. Slightly reduced ability to mediate plasma membrane rupture." evidence="15 17">
    <original>A</original>
    <variation>L</variation>
    <location>
        <position position="47"/>
    </location>
</feature>
<feature type="mutagenesis site" description="Strongly reduced ability to mediate plasma membrane rupture." evidence="17">
    <original>E</original>
    <variation>K</variation>
    <location>
        <position position="49"/>
    </location>
</feature>
<feature type="mutagenesis site" description="Strongly reduced ability to homooligomerize and mediate plasma membrane rupture (cytolysis)." evidence="15">
    <original>D</original>
    <variation>A</variation>
    <location>
        <position position="53"/>
    </location>
</feature>
<feature type="mutagenesis site" description="In mutant M4(exo); decreased ability to mediate plasma membrane rupture." evidence="18">
    <original>FYVPLVV</original>
    <variation>YYTTLVT</variation>
    <location>
        <begin position="76"/>
        <end position="82"/>
    </location>
</feature>
<feature type="mutagenesis site" description="Does not affect ability to homooligomerize, but shows slightly reduced ability to mediate plasma membrane rupture (cytolysis)." evidence="15 17">
    <original>V</original>
    <variation>F</variation>
    <location>
        <position position="82"/>
    </location>
</feature>
<feature type="mutagenesis site" description="Does not affect ability to homooligomerize and mediate plasma membrane rupture (cytolysis)." evidence="15">
    <original>V</original>
    <variation>W</variation>
    <location>
        <position position="82"/>
    </location>
</feature>
<feature type="mutagenesis site" description="Strongly reduced ability to homooligomerize and mediate plasma membrane rupture (cytolysis)." evidence="15">
    <original>I</original>
    <variation>F</variation>
    <location>
        <position position="84"/>
    </location>
</feature>
<feature type="mutagenesis site" description="Reduced ability to mediate plasma membrane rupture." evidence="17">
    <original>I</original>
    <variation>F</variation>
    <location>
        <position position="86"/>
    </location>
</feature>
<feature type="mutagenesis site" description="Strongly reduced ability to mediate plasma membrane rupture." evidence="17">
    <original>L</original>
    <variation>W</variation>
    <location>
        <position position="90"/>
    </location>
</feature>
<feature type="mutagenesis site" description="Strongly reduced ability to homooligomerize and mediate plasma membrane rupture (cytolysis)." evidence="15">
    <original>Q</original>
    <variation>A</variation>
    <location>
        <position position="91"/>
    </location>
</feature>
<feature type="mutagenesis site" description="Reduced ability to mediate plasma membrane rupture." evidence="17">
    <original>G</original>
    <variation>L</variation>
    <location>
        <position position="93"/>
    </location>
</feature>
<feature type="mutagenesis site" description="In mutant M5(cyto); decreased ability to mediate plasma membrane rupture; when associated with V-100, Q-117, A-121 and I-124." evidence="18">
    <original>G</original>
    <variation>V</variation>
    <location>
        <position position="93"/>
    </location>
</feature>
<feature type="mutagenesis site" description="Strongly reduced ability to homooligomerize and mediate plasma membrane rupture (cytolysis)." evidence="15 17">
    <original>G</original>
    <variation>L</variation>
    <location>
        <position position="95"/>
    </location>
</feature>
<feature type="mutagenesis site" description="In mutant M5(cyto); decreased ability to mediate plasma membrane rupture; when associated with V-93, Q-117, A-121 and I-124." evidence="18">
    <original>F</original>
    <variation>V</variation>
    <location>
        <position position="100"/>
    </location>
</feature>
<feature type="mutagenesis site" description="Strongly reduced ability to mediate plasma membrane rupture." evidence="17">
    <original>K</original>
    <variation>E</variation>
    <location>
        <position position="103"/>
    </location>
</feature>
<feature type="mutagenesis site" description="Strongly reduced ability to mediate plasma membrane rupture." evidence="17">
    <original>K</original>
    <variation>E</variation>
    <location>
        <position position="111"/>
    </location>
</feature>
<feature type="mutagenesis site" description="Slightly reduced ability to mediate plasma membrane rupture." evidence="17">
    <original>K</original>
    <variation>E</variation>
    <location>
        <position position="114"/>
    </location>
</feature>
<feature type="mutagenesis site" description="Decreased ability to mediate plasma membrane rupture. In mutant M5(cyto); decreased ability to mediate plasma membrane rupture; when associated with V-93, V-100, A-121 and I-124." evidence="18">
    <original>F</original>
    <variation>Q</variation>
    <location>
        <position position="117"/>
    </location>
</feature>
<feature type="mutagenesis site" description="In mutant M5(cyto); decreased ability to mediate plasma membrane rupture; when associated with V-93, V-100, Q-117 and I-124." evidence="18">
    <original>L</original>
    <variation>A</variation>
    <location>
        <position position="121"/>
    </location>
</feature>
<feature type="mutagenesis site" description="Does not affect ability to homooligomerize and mediate plasma membrane rupture (cytolysis)." evidence="15">
    <original>L</original>
    <variation>F</variation>
    <location>
        <position position="121"/>
    </location>
</feature>
<feature type="mutagenesis site" description="Does not affect ability to homooligomerize, but shows reduced ability to mediate plasma membrane rupture (cytolysis)." evidence="15 17">
    <original>L</original>
    <variation>W</variation>
    <location>
        <position position="121"/>
    </location>
</feature>
<feature type="mutagenesis site" description="Strongly reduced ability to homooligomerize and mediate plasma membrane rupture (cytolysis)." evidence="15">
    <original>T</original>
    <variation>L</variation>
    <location>
        <position position="123"/>
    </location>
</feature>
<feature type="mutagenesis site" description="In mutant M5(cyto); decreased ability to mediate plasma membrane rupture; when associated with V-93, V-100, Q-117 and A-121." evidence="18">
    <original>G</original>
    <variation>I</variation>
    <location>
        <position position="124"/>
    </location>
</feature>
<feature type="mutagenesis site" description="Reduced ability to mediate plasma membrane rupture." evidence="17">
    <original>G</original>
    <variation>L</variation>
    <location>
        <position position="124"/>
    </location>
</feature>
<feature type="mutagenesis site" description="Strongly reduced ability to mediate plasma membrane rupture." evidence="17">
    <original>L</original>
    <variation>W</variation>
    <location>
        <position position="125"/>
    </location>
</feature>
<feature type="mutagenesis site" description="Slightly reduced ability to mediate plasma membrane rupture." evidence="17">
    <original>I</original>
    <variation>F</variation>
    <location>
        <position position="128"/>
    </location>
</feature>
<feature type="mutagenesis site" description="Strongly reduced ability to homooligomerize and mediate plasma membrane rupture (cytolysis)." evidence="15">
    <original>I</original>
    <variation>F</variation>
    <location>
        <position position="134"/>
    </location>
</feature>
<feature type="mutagenesis site" description="Strongly reduced ability to homooligomerize and mediate plasma membrane rupture (cytolysis)." evidence="15">
    <original>A</original>
    <variation>L</variation>
    <location>
        <position position="138"/>
    </location>
</feature>
<feature type="helix" evidence="32">
    <location>
        <begin position="41"/>
        <end position="49"/>
    </location>
</feature>
<feature type="helix" evidence="32">
    <location>
        <begin position="55"/>
        <end position="70"/>
    </location>
</feature>
<feature type="helix" evidence="32">
    <location>
        <begin position="77"/>
        <end position="102"/>
    </location>
</feature>
<feature type="helix" evidence="32">
    <location>
        <begin position="104"/>
        <end position="107"/>
    </location>
</feature>
<feature type="helix" evidence="32">
    <location>
        <begin position="112"/>
        <end position="138"/>
    </location>
</feature>
<comment type="function">
    <molecule>Ninjurin-1</molecule>
    <text evidence="1 7 8 9 11 12 13 14 15 17 18 19 20">Effector of various programmed cell death, such as pyroptosis and necroptosis, which mediates plasma membrane rupture (cytolysis) (PubMed:33472215, PubMed:36468682, PubMed:37196676, PubMed:37198476, PubMed:38614101, PubMed:39667936). Oligomerizes in response to death stimuli and forms ring-like structures on the plasma membrane: acts by cutting and shedding membrane disks, like a cookie cutter, leading to membrane damage and loss that cannot be repaired by the cell (PubMed:38614101). Plasma membrane rupture leads to release intracellular molecules named damage-associated molecular patterns (DAMPs) that propagate the inflammatory response (PubMed:33472215, PubMed:36468682, PubMed:37196676, PubMed:37198476). Mechanistically, mediates plasma membrane rupture by introducing hydrophilic faces of 2 alpha helices into the hydrophobic membrane (PubMed:37198476, PubMed:38614101). Induces plasma membrane rupture downstream of Gasdermin (GSDMA, GSDMB, GSDMC, GSDMD, or GSDME) or MLKL during pyroptosis or necroptosis, respectively (PubMed:33472215, PubMed:36468682, PubMed:37196676, PubMed:37198476). Acts as an effector of PANoptosis downstream of CASP1, CASP4, CASP8 and RIPK3 (By similarity). Also induces plasma membrane rupture in response to cell swelling caused by osmotic stress and ferroptosis downstream of lipid peroxidation (By similarity). Acts as a regulator of Toll-like receptor 4 (TLR4) signaling triggered by lipopolysaccharide (LPS) during systemic inflammation; directly binds LPS (PubMed:26677008). Involved in leukocyte migration during inflammation by promoting transendothelial migration of macrophages via homotypic binding (By similarity). Promotes the migration of monocytes across the brain endothelium to central nervous system inflammatory lesions (PubMed:22162058). Also acts as a homophilic transmembrane adhesion molecule involved in various processes such as axonal growth, cell chemotaxis and angiogenesis (PubMed:33028854, PubMed:8780658, PubMed:9261151). Promotes cell adhesion by mediating homophilic interactions via its extracellular N-terminal adhesion motif (N-NAM) (PubMed:33028854, PubMed:8780658, PubMed:9261151). Involved in the progression of the inflammatory stress by promoting cell-to-cell interactions between immune cells and endothelial cells (PubMed:22162058, PubMed:26677008, PubMed:32147432). Plays a role in nerve regeneration by promoting maturation of Schwann cells (PubMed:8780658, PubMed:9261151). Acts as a regulator of angiogenesis (PubMed:33028854). Promotes the formation of new vessels by mediating the interaction between capillary pericyte cells and endothelial cells (By similarity). Promotes osteoclasts development by enhancing the survival of prefusion osteoclasts (By similarity). Also involved in striated muscle growth and differentiation (By similarity).</text>
</comment>
<comment type="function">
    <molecule>Secreted ninjurin-1</molecule>
    <text evidence="1 10">Secreted form generated by cleavage, which has chemotactic activity (By similarity). Acts as an anti-inflammatory mediator by promoting monocyte recruitment, thereby ameliorating atherosclerosis (PubMed:32883094).</text>
</comment>
<comment type="activity regulation">
    <molecule>Ninjurin-1</molecule>
    <text evidence="1 13 15">In response to death stimuli, homooligomerizes and disrupts membrane integrity by introducing the hydrophilic faces of alpha1 and alpha2 helices into the hydrophobic membrane (PubMed:37198476). Homooligomerization and ability to mediate plasma membrane rupture is inhibited by glycine; it is unclear whether glycine directly or indirectly inhibits homooligomerization (PubMed:36468682). In normal conditions, NINJ1 is autoinhibited via formation of a homodimer: in the inactive homodimer, the alpha1 and alpha2 helices (residues 44-74) form a single transmembrane region without a kink, in which hydrophilic faces of alpha1 and alpha2 helices are sequestered (By similarity).</text>
</comment>
<comment type="subunit">
    <molecule>Ninjurin-1</molecule>
    <text evidence="1 14 15 16 18 20">Homodimer; in absence of death stimuli, forms an inactive homodimer (By similarity). Homooligomer; in response to death stimuli, homooligomerizes into long, highly branched filaments and large, ring-shaped structures in the membrane (PubMed:37196676, PubMed:37198476, PubMed:38396301, PubMed:39667936, PubMed:9261151).</text>
</comment>
<comment type="interaction">
    <interactant intactId="EBI-2802124">
        <id>Q92982</id>
    </interactant>
    <interactant intactId="EBI-13059134">
        <id>Q13520</id>
        <label>AQP6</label>
    </interactant>
    <organismsDiffer>false</organismsDiffer>
    <experiments>3</experiments>
</comment>
<comment type="interaction">
    <interactant intactId="EBI-2802124">
        <id>Q92982</id>
    </interactant>
    <interactant intactId="EBI-12824513">
        <id>Q8TD46-4</id>
        <label>CD200R1</label>
    </interactant>
    <organismsDiffer>false</organismsDiffer>
    <experiments>3</experiments>
</comment>
<comment type="interaction">
    <interactant intactId="EBI-2802124">
        <id>Q92982</id>
    </interactant>
    <interactant intactId="EBI-12851752">
        <id>P40198</id>
        <label>CEACAM3</label>
    </interactant>
    <organismsDiffer>false</organismsDiffer>
    <experiments>3</experiments>
</comment>
<comment type="interaction">
    <interactant intactId="EBI-2802124">
        <id>Q92982</id>
    </interactant>
    <interactant intactId="EBI-6942903">
        <id>Q96BA8</id>
        <label>CREB3L1</label>
    </interactant>
    <organismsDiffer>false</organismsDiffer>
    <experiments>3</experiments>
</comment>
<comment type="interaction">
    <interactant intactId="EBI-2802124">
        <id>Q92982</id>
    </interactant>
    <interactant intactId="EBI-1046040">
        <id>P00387</id>
        <label>CYB5R3</label>
    </interactant>
    <organismsDiffer>false</organismsDiffer>
    <experiments>3</experiments>
</comment>
<comment type="interaction">
    <interactant intactId="EBI-2802124">
        <id>Q92982</id>
    </interactant>
    <interactant intactId="EBI-3915253">
        <id>Q15125</id>
        <label>EBP</label>
    </interactant>
    <organismsDiffer>false</organismsDiffer>
    <experiments>3</experiments>
</comment>
<comment type="interaction">
    <interactant intactId="EBI-2802124">
        <id>Q92982</id>
    </interactant>
    <interactant intactId="EBI-2869867">
        <id>P12314</id>
        <label>FCGR1A</label>
    </interactant>
    <organismsDiffer>false</organismsDiffer>
    <experiments>3</experiments>
</comment>
<comment type="interaction">
    <interactant intactId="EBI-2802124">
        <id>Q92982</id>
    </interactant>
    <interactant intactId="EBI-12142257">
        <id>Q8TBE3</id>
        <label>FNDC9</label>
    </interactant>
    <organismsDiffer>false</organismsDiffer>
    <experiments>3</experiments>
</comment>
<comment type="interaction">
    <interactant intactId="EBI-2802124">
        <id>Q92982</id>
    </interactant>
    <interactant intactId="EBI-712073">
        <id>Q8NBJ4</id>
        <label>GOLM1</label>
    </interactant>
    <organismsDiffer>false</organismsDiffer>
    <experiments>3</experiments>
</comment>
<comment type="interaction">
    <interactant intactId="EBI-2802124">
        <id>Q92982</id>
    </interactant>
    <interactant intactId="EBI-11721746">
        <id>Q8TED1</id>
        <label>GPX8</label>
    </interactant>
    <organismsDiffer>false</organismsDiffer>
    <experiments>3</experiments>
</comment>
<comment type="interaction">
    <interactant intactId="EBI-2802124">
        <id>Q92982</id>
    </interactant>
    <interactant intactId="EBI-10171697">
        <id>Q6A162</id>
        <label>KRT40</label>
    </interactant>
    <organismsDiffer>false</organismsDiffer>
    <experiments>3</experiments>
</comment>
<comment type="interaction">
    <interactant intactId="EBI-2802124">
        <id>Q92982</id>
    </interactant>
    <interactant intactId="EBI-2830566">
        <id>Q9H400</id>
        <label>LIME1</label>
    </interactant>
    <organismsDiffer>false</organismsDiffer>
    <experiments>3</experiments>
</comment>
<comment type="interaction">
    <interactant intactId="EBI-2802124">
        <id>Q92982</id>
    </interactant>
    <interactant intactId="EBI-17263240">
        <id>P15941-11</id>
        <label>MUC1</label>
    </interactant>
    <organismsDiffer>false</organismsDiffer>
    <experiments>3</experiments>
</comment>
<comment type="interaction">
    <interactant intactId="EBI-2802124">
        <id>Q92982</id>
    </interactant>
    <interactant intactId="EBI-3919694">
        <id>P15151</id>
        <label>PVR</label>
    </interactant>
    <organismsDiffer>false</organismsDiffer>
    <experiments>3</experiments>
</comment>
<comment type="interaction">
    <interactant intactId="EBI-2802124">
        <id>Q92982</id>
    </interactant>
    <interactant intactId="EBI-5663627">
        <id>Q16585</id>
        <label>SGCB</label>
    </interactant>
    <organismsDiffer>false</organismsDiffer>
    <experiments>3</experiments>
</comment>
<comment type="interaction">
    <interactant intactId="EBI-2802124">
        <id>Q92982</id>
    </interactant>
    <interactant intactId="EBI-6268651">
        <id>Q9NPL8</id>
        <label>TIMMDC1</label>
    </interactant>
    <organismsDiffer>false</organismsDiffer>
    <experiments>3</experiments>
</comment>
<comment type="interaction">
    <interactant intactId="EBI-2802124">
        <id>Q92982</id>
    </interactant>
    <interactant intactId="EBI-12947623">
        <id>Q96MV1</id>
        <label>TLCD4</label>
    </interactant>
    <organismsDiffer>false</organismsDiffer>
    <experiments>3</experiments>
</comment>
<comment type="interaction">
    <interactant intactId="EBI-2802124">
        <id>Q92982</id>
    </interactant>
    <interactant intactId="EBI-8638294">
        <id>Q9NUH8</id>
        <label>TMEM14B</label>
    </interactant>
    <organismsDiffer>false</organismsDiffer>
    <experiments>3</experiments>
</comment>
<comment type="subcellular location">
    <molecule>Ninjurin-1</molecule>
    <subcellularLocation>
        <location evidence="15 16 18">Cell membrane</location>
        <topology evidence="15 18">Multi-pass membrane protein</topology>
    </subcellularLocation>
    <subcellularLocation>
        <location evidence="1">Synaptic cell membrane</location>
        <topology evidence="3">Multi-pass membrane protein</topology>
    </subcellularLocation>
</comment>
<comment type="subcellular location">
    <molecule>Secreted ninjurin-1</molecule>
    <subcellularLocation>
        <location evidence="27">Secreted</location>
    </subcellularLocation>
</comment>
<comment type="tissue specificity">
    <text evidence="19">Widely expressed in both adult and embryonic tissues, primarily those of epithelial origin.</text>
</comment>
<comment type="induction">
    <text evidence="19">By nerve injury both in dorsal root ganglion neurons and in Schwann cells.</text>
</comment>
<comment type="domain">
    <molecule>Ninjurin-1</molecule>
    <text evidence="1 15">Composed of 4 alpha helices: 2 hydrophobic transmembrane regions (alpha3 and alpha4) and 2 alpha helices (alpha1 and alpha2) (PubMed:37198476). Alpha1 and alpha2 feature one hydrophobic side and a hydrophilic side (PubMed:37198476). Following NINJ1 activation, alpha1 and alpha2 helices insert into the membrane and drive NINJ1 oligomerization via interactions between alpha3 and alpha4 and the hydrophobic face of alpha1 from an adjacent subunit (PubMed:37198476). Such structures disrupt membrane integrity and form a lesion through the introduction of the hydrophilic faces of alpha1 and alpha2 into the hydrophobic membrane (PubMed:37198476). In absence of death stimuli, NINJ1 is an inactive homodimer, where the alpha1 and alpha2 helices form a single transmembrane region without a kink: in the homodimer, hydrophilic faces of alpha1 and alpha2 helices are sequestered and the binding site for kinked alpha1 and alpha2 helices from neighboring activated NINJ1 molecules are occluded, thereby preventing membrane rupture (By similarity). The topology shown in the entry corresponds to the activated form (PubMed:37198476).</text>
</comment>
<comment type="PTM">
    <molecule>Ninjurin-1</molecule>
    <text evidence="27">Cleaved by MMP9 protease to generate the Secreted ninjurin-1 form.</text>
</comment>
<comment type="PTM">
    <molecule>Ninjurin-1</molecule>
    <text evidence="1">N-linked glycosylation is required for homooligomerization.</text>
</comment>
<comment type="similarity">
    <text evidence="26">Belongs to the ninjurin family.</text>
</comment>
<comment type="online information" name="Protein Spotlight">
    <link uri="https://www.proteinspotlight.org/back_issues/265/"/>
    <text>Rupture - Issue 265 of January 2024</text>
</comment>
<reference key="1">
    <citation type="journal article" date="1996" name="Neuron">
        <title>Ninjurin, a novel adhesion molecule, is induced by nerve injury and promotes axonal growth.</title>
        <authorList>
            <person name="Araki T."/>
            <person name="Milbrandt J."/>
        </authorList>
    </citation>
    <scope>NUCLEOTIDE SEQUENCE [MRNA]</scope>
    <scope>FUNCTION</scope>
    <scope>TISSUE SPECIFICITY</scope>
    <scope>INDUCTION</scope>
    <scope>VARIANT ASP-110</scope>
</reference>
<reference key="2">
    <citation type="journal article" date="1998" name="Genomics">
        <title>The human homologue of the ninjurin gene maps to the candidate region of hereditary sensory neuropathy type I (HSNI).</title>
        <authorList>
            <person name="Chadwick B.P."/>
            <person name="Heath S.K."/>
            <person name="Williamson J."/>
            <person name="Obermayr F."/>
            <person name="Patel L."/>
            <person name="Sheer D."/>
            <person name="Frischauf A.-M."/>
        </authorList>
    </citation>
    <scope>NUCLEOTIDE SEQUENCE [GENOMIC DNA / MRNA]</scope>
    <scope>VARIANT ASP-110</scope>
</reference>
<reference key="3">
    <citation type="submission" date="2003-05" db="EMBL/GenBank/DDBJ databases">
        <title>Cloning of human full-length CDSs in BD Creator(TM) system donor vector.</title>
        <authorList>
            <person name="Kalnine N."/>
            <person name="Chen X."/>
            <person name="Rolfs A."/>
            <person name="Halleck A."/>
            <person name="Hines L."/>
            <person name="Eisenstein S."/>
            <person name="Koundinya M."/>
            <person name="Raphael J."/>
            <person name="Moreira D."/>
            <person name="Kelley T."/>
            <person name="LaBaer J."/>
            <person name="Lin Y."/>
            <person name="Phelan M."/>
            <person name="Farmer A."/>
        </authorList>
    </citation>
    <scope>NUCLEOTIDE SEQUENCE [LARGE SCALE MRNA]</scope>
</reference>
<reference key="4">
    <citation type="journal article" date="2004" name="Nature">
        <title>DNA sequence and analysis of human chromosome 9.</title>
        <authorList>
            <person name="Humphray S.J."/>
            <person name="Oliver K."/>
            <person name="Hunt A.R."/>
            <person name="Plumb R.W."/>
            <person name="Loveland J.E."/>
            <person name="Howe K.L."/>
            <person name="Andrews T.D."/>
            <person name="Searle S."/>
            <person name="Hunt S.E."/>
            <person name="Scott C.E."/>
            <person name="Jones M.C."/>
            <person name="Ainscough R."/>
            <person name="Almeida J.P."/>
            <person name="Ambrose K.D."/>
            <person name="Ashwell R.I.S."/>
            <person name="Babbage A.K."/>
            <person name="Babbage S."/>
            <person name="Bagguley C.L."/>
            <person name="Bailey J."/>
            <person name="Banerjee R."/>
            <person name="Barker D.J."/>
            <person name="Barlow K.F."/>
            <person name="Bates K."/>
            <person name="Beasley H."/>
            <person name="Beasley O."/>
            <person name="Bird C.P."/>
            <person name="Bray-Allen S."/>
            <person name="Brown A.J."/>
            <person name="Brown J.Y."/>
            <person name="Burford D."/>
            <person name="Burrill W."/>
            <person name="Burton J."/>
            <person name="Carder C."/>
            <person name="Carter N.P."/>
            <person name="Chapman J.C."/>
            <person name="Chen Y."/>
            <person name="Clarke G."/>
            <person name="Clark S.Y."/>
            <person name="Clee C.M."/>
            <person name="Clegg S."/>
            <person name="Collier R.E."/>
            <person name="Corby N."/>
            <person name="Crosier M."/>
            <person name="Cummings A.T."/>
            <person name="Davies J."/>
            <person name="Dhami P."/>
            <person name="Dunn M."/>
            <person name="Dutta I."/>
            <person name="Dyer L.W."/>
            <person name="Earthrowl M.E."/>
            <person name="Faulkner L."/>
            <person name="Fleming C.J."/>
            <person name="Frankish A."/>
            <person name="Frankland J.A."/>
            <person name="French L."/>
            <person name="Fricker D.G."/>
            <person name="Garner P."/>
            <person name="Garnett J."/>
            <person name="Ghori J."/>
            <person name="Gilbert J.G.R."/>
            <person name="Glison C."/>
            <person name="Grafham D.V."/>
            <person name="Gribble S."/>
            <person name="Griffiths C."/>
            <person name="Griffiths-Jones S."/>
            <person name="Grocock R."/>
            <person name="Guy J."/>
            <person name="Hall R.E."/>
            <person name="Hammond S."/>
            <person name="Harley J.L."/>
            <person name="Harrison E.S.I."/>
            <person name="Hart E.A."/>
            <person name="Heath P.D."/>
            <person name="Henderson C.D."/>
            <person name="Hopkins B.L."/>
            <person name="Howard P.J."/>
            <person name="Howden P.J."/>
            <person name="Huckle E."/>
            <person name="Johnson C."/>
            <person name="Johnson D."/>
            <person name="Joy A.A."/>
            <person name="Kay M."/>
            <person name="Keenan S."/>
            <person name="Kershaw J.K."/>
            <person name="Kimberley A.M."/>
            <person name="King A."/>
            <person name="Knights A."/>
            <person name="Laird G.K."/>
            <person name="Langford C."/>
            <person name="Lawlor S."/>
            <person name="Leongamornlert D.A."/>
            <person name="Leversha M."/>
            <person name="Lloyd C."/>
            <person name="Lloyd D.M."/>
            <person name="Lovell J."/>
            <person name="Martin S."/>
            <person name="Mashreghi-Mohammadi M."/>
            <person name="Matthews L."/>
            <person name="McLaren S."/>
            <person name="McLay K.E."/>
            <person name="McMurray A."/>
            <person name="Milne S."/>
            <person name="Nickerson T."/>
            <person name="Nisbett J."/>
            <person name="Nordsiek G."/>
            <person name="Pearce A.V."/>
            <person name="Peck A.I."/>
            <person name="Porter K.M."/>
            <person name="Pandian R."/>
            <person name="Pelan S."/>
            <person name="Phillimore B."/>
            <person name="Povey S."/>
            <person name="Ramsey Y."/>
            <person name="Rand V."/>
            <person name="Scharfe M."/>
            <person name="Sehra H.K."/>
            <person name="Shownkeen R."/>
            <person name="Sims S.K."/>
            <person name="Skuce C.D."/>
            <person name="Smith M."/>
            <person name="Steward C.A."/>
            <person name="Swarbreck D."/>
            <person name="Sycamore N."/>
            <person name="Tester J."/>
            <person name="Thorpe A."/>
            <person name="Tracey A."/>
            <person name="Tromans A."/>
            <person name="Thomas D.W."/>
            <person name="Wall M."/>
            <person name="Wallis J.M."/>
            <person name="West A.P."/>
            <person name="Whitehead S.L."/>
            <person name="Willey D.L."/>
            <person name="Williams S.A."/>
            <person name="Wilming L."/>
            <person name="Wray P.W."/>
            <person name="Young L."/>
            <person name="Ashurst J.L."/>
            <person name="Coulson A."/>
            <person name="Blocker H."/>
            <person name="Durbin R.M."/>
            <person name="Sulston J.E."/>
            <person name="Hubbard T."/>
            <person name="Jackson M.J."/>
            <person name="Bentley D.R."/>
            <person name="Beck S."/>
            <person name="Rogers J."/>
            <person name="Dunham I."/>
        </authorList>
    </citation>
    <scope>NUCLEOTIDE SEQUENCE [LARGE SCALE GENOMIC DNA]</scope>
</reference>
<reference key="5">
    <citation type="submission" date="2005-07" db="EMBL/GenBank/DDBJ databases">
        <authorList>
            <person name="Mural R.J."/>
            <person name="Istrail S."/>
            <person name="Sutton G.G."/>
            <person name="Florea L."/>
            <person name="Halpern A.L."/>
            <person name="Mobarry C.M."/>
            <person name="Lippert R."/>
            <person name="Walenz B."/>
            <person name="Shatkay H."/>
            <person name="Dew I."/>
            <person name="Miller J.R."/>
            <person name="Flanigan M.J."/>
            <person name="Edwards N.J."/>
            <person name="Bolanos R."/>
            <person name="Fasulo D."/>
            <person name="Halldorsson B.V."/>
            <person name="Hannenhalli S."/>
            <person name="Turner R."/>
            <person name="Yooseph S."/>
            <person name="Lu F."/>
            <person name="Nusskern D.R."/>
            <person name="Shue B.C."/>
            <person name="Zheng X.H."/>
            <person name="Zhong F."/>
            <person name="Delcher A.L."/>
            <person name="Huson D.H."/>
            <person name="Kravitz S.A."/>
            <person name="Mouchard L."/>
            <person name="Reinert K."/>
            <person name="Remington K.A."/>
            <person name="Clark A.G."/>
            <person name="Waterman M.S."/>
            <person name="Eichler E.E."/>
            <person name="Adams M.D."/>
            <person name="Hunkapiller M.W."/>
            <person name="Myers E.W."/>
            <person name="Venter J.C."/>
        </authorList>
    </citation>
    <scope>NUCLEOTIDE SEQUENCE [LARGE SCALE GENOMIC DNA]</scope>
</reference>
<reference key="6">
    <citation type="journal article" date="2004" name="Genome Res.">
        <title>The status, quality, and expansion of the NIH full-length cDNA project: the Mammalian Gene Collection (MGC).</title>
        <authorList>
            <consortium name="The MGC Project Team"/>
        </authorList>
    </citation>
    <scope>NUCLEOTIDE SEQUENCE [LARGE SCALE MRNA]</scope>
    <scope>VARIANT ASP-110</scope>
    <source>
        <tissue>Lung</tissue>
        <tissue>Skin</tissue>
    </source>
</reference>
<reference key="7">
    <citation type="journal article" date="1997" name="J. Biol. Chem.">
        <title>Mechanism of homophilic binding mediated by ninjurin, a novel widely expressed adhesion molecule.</title>
        <authorList>
            <person name="Araki T."/>
            <person name="Zimonjic D.B."/>
            <person name="Popescu N.C."/>
            <person name="Milbrandt J."/>
        </authorList>
    </citation>
    <scope>FUNCTION</scope>
</reference>
<reference key="8">
    <citation type="journal article" date="2011" name="Ann. Neurol.">
        <title>Role of Ninjurin-1 in the migration of myeloid cells to central nervous system inflammatory lesions.</title>
        <authorList>
            <person name="Ifergan I."/>
            <person name="Kebir H."/>
            <person name="Terouz S."/>
            <person name="Alvarez J.I."/>
            <person name="Lecuyer M.A."/>
            <person name="Gendron S."/>
            <person name="Bourbonniere L."/>
            <person name="Dunay I.R."/>
            <person name="Bouthillier A."/>
            <person name="Moumdjian R."/>
            <person name="Fontana A."/>
            <person name="Haqqani A."/>
            <person name="Klopstein A."/>
            <person name="Prinz M."/>
            <person name="Lopez-Vales R."/>
            <person name="Birchler T."/>
            <person name="Prat A."/>
        </authorList>
    </citation>
    <scope>FUNCTION</scope>
</reference>
<reference key="9">
    <citation type="journal article" date="2012" name="Proc. Natl. Acad. Sci. U.S.A.">
        <title>N-terminal acetylome analyses and functional insights of the N-terminal acetyltransferase NatB.</title>
        <authorList>
            <person name="Van Damme P."/>
            <person name="Lasa M."/>
            <person name="Polevoda B."/>
            <person name="Gazquez C."/>
            <person name="Elosegui-Artola A."/>
            <person name="Kim D.S."/>
            <person name="De Juan-Pardo E."/>
            <person name="Demeyer K."/>
            <person name="Hole K."/>
            <person name="Larrea E."/>
            <person name="Timmerman E."/>
            <person name="Prieto J."/>
            <person name="Arnesen T."/>
            <person name="Sherman F."/>
            <person name="Gevaert K."/>
            <person name="Aldabe R."/>
        </authorList>
    </citation>
    <scope>ACETYLATION [LARGE SCALE ANALYSIS] AT MET-1</scope>
    <scope>IDENTIFICATION BY MASS SPECTROMETRY [LARGE SCALE ANALYSIS]</scope>
</reference>
<reference key="10">
    <citation type="journal article" date="2016" name="Int. J. Oncol.">
        <title>Ninjurin1 regulates lipopolysaccharide-induced inflammation through direct binding.</title>
        <authorList>
            <person name="Shin M.W."/>
            <person name="Bae S.J."/>
            <person name="Wee H.J."/>
            <person name="Lee H.J."/>
            <person name="Ahn B.J."/>
            <person name="Le H."/>
            <person name="Lee E.J."/>
            <person name="Kim R.H."/>
            <person name="Lee H.S."/>
            <person name="Seo J.H."/>
            <person name="Park J.H."/>
            <person name="Kim K.W."/>
        </authorList>
    </citation>
    <scope>FUNCTION</scope>
</reference>
<reference key="11">
    <citation type="journal article" date="2020" name="Circulation">
        <title>Anti-inflammatory actions of soluble ninjurin-1 ameliorate atherosclerosis.</title>
        <authorList>
            <person name="Jeon S."/>
            <person name="Kim T.K."/>
            <person name="Jeong S.J."/>
            <person name="Jung I.H."/>
            <person name="Kim N."/>
            <person name="Lee M.N."/>
            <person name="Sonn S.K."/>
            <person name="Seo S."/>
            <person name="Jin J."/>
            <person name="Kweon H.Y."/>
            <person name="Kim S."/>
            <person name="Shim D."/>
            <person name="Park Y.M."/>
            <person name="Lee S.H."/>
            <person name="Kim K.W."/>
            <person name="Cybulsky M.I."/>
            <person name="Shim H."/>
            <person name="Roh T.Y."/>
            <person name="Park W.Y."/>
            <person name="Lee H.O."/>
            <person name="Choi J.H."/>
            <person name="Park S.H."/>
            <person name="Oh G.T."/>
        </authorList>
    </citation>
    <scope>FUNCTION (SECRETED NINJURIN-1)</scope>
    <scope>PROTEOLYTIC CLEAVAGE</scope>
</reference>
<reference key="12">
    <citation type="journal article" date="2020" name="Life Sci.">
        <title>Ninjurin-1 upregulated by TNFalpha receptor 1 stimulates monocyte adhesion to human TNFalpha-activated endothelial cells; benefic effects of amlodipine.</title>
        <authorList>
            <person name="Toma L."/>
            <person name="Sanda G.M."/>
            <person name="Raileanu M."/>
            <person name="Stancu C.S."/>
            <person name="Niculescu L.S."/>
            <person name="Sima A.V."/>
        </authorList>
    </citation>
    <scope>FUNCTION</scope>
</reference>
<reference key="13">
    <citation type="journal article" date="2020" name="Sci. Rep.">
        <title>Ninjurin 1 dodecamer peptide containing the N-terminal adhesion motif (N-NAM) exerts proangiogenic effects in HUVECs and in the postischemic brain.</title>
        <authorList>
            <person name="Kim S.W."/>
            <person name="Lee H.K."/>
            <person name="Seol S.I."/>
            <person name="Davaanyam D."/>
            <person name="Lee H."/>
            <person name="Lee J.K."/>
        </authorList>
    </citation>
    <scope>FUNCTION</scope>
</reference>
<reference key="14">
    <citation type="journal article" date="2021" name="Nature">
        <title>NINJ1 mediates plasma membrane rupture during lytic cell death.</title>
        <authorList>
            <person name="Kayagaki N."/>
            <person name="Kornfeld O.S."/>
            <person name="Lee B.L."/>
            <person name="Stowe I.B."/>
            <person name="O'Rourke K."/>
            <person name="Li Q."/>
            <person name="Sandoval W."/>
            <person name="Yan D."/>
            <person name="Kang J."/>
            <person name="Xu M."/>
            <person name="Zhang J."/>
            <person name="Lee W.P."/>
            <person name="McKenzie B.S."/>
            <person name="Ulas G."/>
            <person name="Payandeh J."/>
            <person name="Roose-Girma M."/>
            <person name="Modrusan Z."/>
            <person name="Reja R."/>
            <person name="Sagolla M."/>
            <person name="Webster J.D."/>
            <person name="Cho V."/>
            <person name="Andrews T.D."/>
            <person name="Morris L.X."/>
            <person name="Miosge L.A."/>
            <person name="Goodnow C.C."/>
            <person name="Bertram E.M."/>
            <person name="Dixit V.M."/>
        </authorList>
    </citation>
    <scope>FUNCTION</scope>
    <scope>SUBUNIT</scope>
</reference>
<reference key="15">
    <citation type="journal article" date="2022" name="Elife">
        <title>Glycine inhibits NINJ1 membrane clustering to suppress plasma membrane rupture in cell death.</title>
        <authorList>
            <person name="Borges J.P."/>
            <person name="Saetra R.S.R."/>
            <person name="Volchuk A."/>
            <person name="Bugge M."/>
            <person name="Devant P."/>
            <person name="Sporsheim B."/>
            <person name="Kilburn B.R."/>
            <person name="Evavold C.L."/>
            <person name="Kagan J.C."/>
            <person name="Goldenberg N.M."/>
            <person name="Flo T.H."/>
            <person name="Steinberg B.E."/>
        </authorList>
    </citation>
    <scope>FUNCTION</scope>
    <scope>ACTIVITY REGULATION</scope>
</reference>
<reference key="16">
    <citation type="journal article" date="2023" name="Nature">
        <title>Inhibiting membrane rupture with NINJ1 antibodies limits tissue injury.</title>
        <authorList>
            <person name="Kayagaki N."/>
            <person name="Stowe I.B."/>
            <person name="Alegre K."/>
            <person name="Deshpande I."/>
            <person name="Wu S."/>
            <person name="Lin Z."/>
            <person name="Kornfeld O.S."/>
            <person name="Lee B.L."/>
            <person name="Zhang J."/>
            <person name="Liu J."/>
            <person name="Suto E."/>
            <person name="Lee W.P."/>
            <person name="Schneider K."/>
            <person name="Lin W."/>
            <person name="Seshasayee D."/>
            <person name="Bhangale T."/>
            <person name="Chalouni C."/>
            <person name="Johnson M.C."/>
            <person name="Joshi P."/>
            <person name="Mossemann J."/>
            <person name="Zhao S."/>
            <person name="Ali D."/>
            <person name="Goldenberg N.M."/>
            <person name="Sayed B.A."/>
            <person name="Steinberg B.E."/>
            <person name="Newton K."/>
            <person name="Webster J.D."/>
            <person name="Kelly R.L."/>
            <person name="Dixit V.M."/>
        </authorList>
    </citation>
    <scope>FUNCTION</scope>
    <scope>SUBUNIT</scope>
</reference>
<reference key="17">
    <citation type="journal article" date="2024" name="EMBO J.">
        <title>NINJ1 induces plasma membrane rupture and release of damage-associated molecular pattern molecules during ferroptosis.</title>
        <authorList>
            <person name="Ramos S."/>
            <person name="Hartenian E."/>
            <person name="Santos J.C."/>
            <person name="Walch P."/>
            <person name="Broz P."/>
        </authorList>
    </citation>
    <scope>SUBCELLULAR LOCATION</scope>
    <scope>SUBUNIT</scope>
</reference>
<reference evidence="29" key="18">
    <citation type="journal article" date="2023" name="Nature">
        <title>Structural basis of NINJ1-mediated plasma membrane rupture in cell death.</title>
        <authorList>
            <person name="Degen M."/>
            <person name="Santos J.C."/>
            <person name="Pluhackova K."/>
            <person name="Cebrero G."/>
            <person name="Ramos S."/>
            <person name="Jankevicius G."/>
            <person name="Hartenian E."/>
            <person name="Guillerm U."/>
            <person name="Mari S.A."/>
            <person name="Kohl B."/>
            <person name="Mueller D.J."/>
            <person name="Schanda P."/>
            <person name="Maier T."/>
            <person name="Perez C."/>
            <person name="Sieben C."/>
            <person name="Broz P."/>
            <person name="Hiller S."/>
        </authorList>
    </citation>
    <scope>STRUCTURE BY ELECTRON MICROSCOPY (3.8 ANGSTROMS) OF 2-152</scope>
    <scope>FUNCTION</scope>
    <scope>SUBUNIT</scope>
    <scope>ACTIVITY REGULATION</scope>
    <scope>SUBCELLULAR LOCATION</scope>
    <scope>TOPOLOGY</scope>
    <scope>DOMAIN</scope>
    <scope>MUTAGENESIS OF LYS-45; ALA-47; ASP-53; VAL-82; ILE-84; GLN-91; GLY-95; LEU-121; THR-123; ILE-134 AND ALA-138</scope>
</reference>
<reference key="19">
    <citation type="journal article" date="2024" name="Cell">
        <title>NINJ1 mediates plasma membrane rupture by cutting and releasing membrane disks.</title>
        <authorList>
            <person name="David L."/>
            <person name="Borges J.P."/>
            <person name="Hollingsworth L.R."/>
            <person name="Volchuk A."/>
            <person name="Jansen I."/>
            <person name="Garlick E."/>
            <person name="Steinberg B.E."/>
            <person name="Wu H."/>
        </authorList>
    </citation>
    <scope>STRUCTURE BY ELECTRON MICROSCOPY (4.3 ANGSTROMS)</scope>
    <scope>FUNCTION</scope>
    <scope>SUBCELLULAR LOCATION</scope>
    <scope>SUBUNIT</scope>
    <scope>MUTAGENESIS OF 44-LYS-LYS-45; ALA-47; GLU-49; VAL-82; ILE-86; LEU-90; GLY-93; GLY-95; LYS-103; LYS-111; LYS-114; LEU-121; GLY-124; LEU-125 AND ILE-128</scope>
</reference>
<reference evidence="30" key="20">
    <citation type="journal article" date="2024" name="Cell">
        <title>How NINJ1 mediates plasma membrane rupture and why NINJ2 cannot.</title>
        <authorList>
            <person name="Sahoo B."/>
            <person name="Mou Z."/>
            <person name="Liu W."/>
            <person name="Dubyak G."/>
            <person name="Dai X."/>
        </authorList>
    </citation>
    <scope>STRUCTURE BY ELECTRON MICROSCOPY (2.75 ANGSTROMS) OF 2-152</scope>
    <scope>FUNCTION</scope>
    <scope>SUBCELLULAR LOCATION</scope>
    <scope>SUBUNIT</scope>
    <scope>MUTAGENESIS OF 76-PHE--VAL-82; GLY-93; PHE-100; PHE-117; LEU-121 AND GLY-124</scope>
</reference>
<gene>
    <name evidence="23 28" type="primary">NINJ1</name>
</gene>
<accession>Q92982</accession>
<accession>Q6GU89</accession>
<accession>Q8WUV5</accession>
<accession>Q9BT07</accession>